<name>RND2_MOUSE</name>
<comment type="function">
    <text evidence="1">May be specifically involved in neuronal and hepatic functions. Is a C3 toxin-insensitive member of the Rho subfamily (By similarity).</text>
</comment>
<comment type="subunit">
    <text evidence="2 3">Interacts with the Rho-GAP domain of RACGAP1. Interacts with UBXD5. Interacts with PRAG1 (By similarity).</text>
</comment>
<comment type="subcellular location">
    <subcellularLocation>
        <location evidence="8">Cytoplasmic vesicle</location>
        <location evidence="8">Secretory vesicle</location>
        <location evidence="8">Acrosome membrane</location>
        <topology evidence="8">Lipid-anchor</topology>
        <orientation evidence="8">Cytoplasmic side</orientation>
    </subcellularLocation>
    <text evidence="2">Colocalizes with RACGAP1 in Golgi-derived proacrosomal vesicles and the acrosome.</text>
</comment>
<comment type="tissue specificity">
    <text evidence="6">Expressed specifically in neurons in the brain and spinal cord and also in hepatic stellate cells.</text>
</comment>
<comment type="similarity">
    <text evidence="8">Belongs to the small GTPase superfamily. Rho family.</text>
</comment>
<accession>Q9QYM5</accession>
<accession>O35279</accession>
<gene>
    <name type="primary">Rnd2</name>
    <name type="synonym">Arhn</name>
    <name type="synonym">Rho7</name>
    <name evidence="7" type="synonym">Rhon</name>
</gene>
<sequence>MEGQSGRCKIVVVGDAECGKTALLQVFAKDAYPGSYVPTVFENYTASFEIDKRRIELNMWDTSGSSYYDNVRPLAYPDSDAVLICFDISRPETLDSVLKKWQGETQEFCPNAKVVLVGCKLDMRTDLATLRELSKQRLIPVTHEQGTVLAKQVGAVSYVECSSRSSERSVRDVFHVATVASLGRGHRQLRRTDSRRGLQRSTQLSGRPDRGNEGEMHKDRAKSCNLM</sequence>
<evidence type="ECO:0000250" key="1"/>
<evidence type="ECO:0000250" key="2">
    <source>
        <dbReference type="UniProtKB" id="P52198"/>
    </source>
</evidence>
<evidence type="ECO:0000250" key="3">
    <source>
        <dbReference type="UniProtKB" id="Q5HZE6"/>
    </source>
</evidence>
<evidence type="ECO:0000255" key="4"/>
<evidence type="ECO:0000256" key="5">
    <source>
        <dbReference type="SAM" id="MobiDB-lite"/>
    </source>
</evidence>
<evidence type="ECO:0000269" key="6">
    <source>
    </source>
</evidence>
<evidence type="ECO:0000303" key="7">
    <source>
    </source>
</evidence>
<evidence type="ECO:0000305" key="8"/>
<protein>
    <recommendedName>
        <fullName>Rho-related GTP-binding protein RhoN</fullName>
    </recommendedName>
    <alternativeName>
        <fullName>Rho family GTPase 2</fullName>
    </alternativeName>
    <alternativeName>
        <fullName>Rho-related GTP-binding protein Rho7</fullName>
    </alternativeName>
    <alternativeName>
        <fullName>Rnd2</fullName>
    </alternativeName>
</protein>
<organism>
    <name type="scientific">Mus musculus</name>
    <name type="common">Mouse</name>
    <dbReference type="NCBI Taxonomy" id="10090"/>
    <lineage>
        <taxon>Eukaryota</taxon>
        <taxon>Metazoa</taxon>
        <taxon>Chordata</taxon>
        <taxon>Craniata</taxon>
        <taxon>Vertebrata</taxon>
        <taxon>Euteleostomi</taxon>
        <taxon>Mammalia</taxon>
        <taxon>Eutheria</taxon>
        <taxon>Euarchontoglires</taxon>
        <taxon>Glires</taxon>
        <taxon>Rodentia</taxon>
        <taxon>Myomorpha</taxon>
        <taxon>Muroidea</taxon>
        <taxon>Muridae</taxon>
        <taxon>Murinae</taxon>
        <taxon>Mus</taxon>
        <taxon>Mus</taxon>
    </lineage>
</organism>
<reference key="1">
    <citation type="journal article" date="1999" name="Brain Res. Mol. Brain Res.">
        <title>RhoN, a novel small GTP-binding protein expressed predominantly in neurons and hepatic stellate cells.</title>
        <authorList>
            <person name="Nishi M."/>
            <person name="Takeshima H."/>
            <person name="Houtani T."/>
            <person name="Nakagawara K."/>
            <person name="Noda T."/>
            <person name="Sugimoto T."/>
        </authorList>
    </citation>
    <scope>NUCLEOTIDE SEQUENCE [GENOMIC DNA]</scope>
    <scope>TISSUE SPECIFICITY</scope>
</reference>
<reference key="2">
    <citation type="submission" date="1997-07" db="EMBL/GenBank/DDBJ databases">
        <authorList>
            <person name="Stuart R.O."/>
            <person name="Nigam S.K."/>
        </authorList>
    </citation>
    <scope>NUCLEOTIDE SEQUENCE [MRNA] OF 7-227</scope>
</reference>
<feature type="chain" id="PRO_0000198877" description="Rho-related GTP-binding protein RhoN">
    <location>
        <begin position="1"/>
        <end position="224"/>
    </location>
</feature>
<feature type="propeptide" id="PRO_0000281229" description="Removed in mature form" evidence="1">
    <location>
        <begin position="225"/>
        <end position="227"/>
    </location>
</feature>
<feature type="region of interest" description="Disordered" evidence="5">
    <location>
        <begin position="186"/>
        <end position="227"/>
    </location>
</feature>
<feature type="short sequence motif" description="Effector region" evidence="4">
    <location>
        <begin position="36"/>
        <end position="44"/>
    </location>
</feature>
<feature type="compositionally biased region" description="Basic and acidic residues" evidence="5">
    <location>
        <begin position="207"/>
        <end position="227"/>
    </location>
</feature>
<feature type="binding site" evidence="1">
    <location>
        <begin position="14"/>
        <end position="21"/>
    </location>
    <ligand>
        <name>GTP</name>
        <dbReference type="ChEBI" id="CHEBI:37565"/>
    </ligand>
</feature>
<feature type="binding site" evidence="1">
    <location>
        <begin position="61"/>
        <end position="65"/>
    </location>
    <ligand>
        <name>GTP</name>
        <dbReference type="ChEBI" id="CHEBI:37565"/>
    </ligand>
</feature>
<feature type="binding site" evidence="1">
    <location>
        <begin position="119"/>
        <end position="122"/>
    </location>
    <ligand>
        <name>GTP</name>
        <dbReference type="ChEBI" id="CHEBI:37565"/>
    </ligand>
</feature>
<feature type="modified residue" description="Cysteine methyl ester" evidence="1">
    <location>
        <position position="224"/>
    </location>
</feature>
<feature type="lipid moiety-binding region" description="S-geranylgeranyl cysteine" evidence="1">
    <location>
        <position position="224"/>
    </location>
</feature>
<keyword id="KW-0968">Cytoplasmic vesicle</keyword>
<keyword id="KW-0342">GTP-binding</keyword>
<keyword id="KW-0449">Lipoprotein</keyword>
<keyword id="KW-0472">Membrane</keyword>
<keyword id="KW-0488">Methylation</keyword>
<keyword id="KW-0547">Nucleotide-binding</keyword>
<keyword id="KW-0636">Prenylation</keyword>
<keyword id="KW-1185">Reference proteome</keyword>
<proteinExistence type="evidence at transcript level"/>
<dbReference type="EMBL" id="AB017787">
    <property type="protein sequence ID" value="BAA76545.1"/>
    <property type="molecule type" value="Genomic_DNA"/>
</dbReference>
<dbReference type="EMBL" id="AF016482">
    <property type="protein sequence ID" value="AAB68844.1"/>
    <property type="molecule type" value="mRNA"/>
</dbReference>
<dbReference type="CCDS" id="CCDS25473.1"/>
<dbReference type="RefSeq" id="NP_033838.1">
    <property type="nucleotide sequence ID" value="NM_009708.2"/>
</dbReference>
<dbReference type="SMR" id="Q9QYM5"/>
<dbReference type="BioGRID" id="198202">
    <property type="interactions" value="2"/>
</dbReference>
<dbReference type="FunCoup" id="Q9QYM5">
    <property type="interactions" value="685"/>
</dbReference>
<dbReference type="STRING" id="10090.ENSMUSP00000001347"/>
<dbReference type="iPTMnet" id="Q9QYM5"/>
<dbReference type="PhosphoSitePlus" id="Q9QYM5"/>
<dbReference type="PaxDb" id="10090-ENSMUSP00000001347"/>
<dbReference type="ProteomicsDB" id="299852"/>
<dbReference type="Antibodypedia" id="29498">
    <property type="antibodies" value="116 antibodies from 26 providers"/>
</dbReference>
<dbReference type="DNASU" id="11858"/>
<dbReference type="Ensembl" id="ENSMUST00000001347.7">
    <property type="protein sequence ID" value="ENSMUSP00000001347.7"/>
    <property type="gene ID" value="ENSMUSG00000001313.13"/>
</dbReference>
<dbReference type="GeneID" id="11858"/>
<dbReference type="KEGG" id="mmu:11858"/>
<dbReference type="UCSC" id="uc007lpa.1">
    <property type="organism name" value="mouse"/>
</dbReference>
<dbReference type="AGR" id="MGI:1338755"/>
<dbReference type="CTD" id="8153"/>
<dbReference type="MGI" id="MGI:1338755">
    <property type="gene designation" value="Rnd2"/>
</dbReference>
<dbReference type="VEuPathDB" id="HostDB:ENSMUSG00000001313"/>
<dbReference type="eggNOG" id="KOG0393">
    <property type="taxonomic scope" value="Eukaryota"/>
</dbReference>
<dbReference type="GeneTree" id="ENSGT00940000157020"/>
<dbReference type="HOGENOM" id="CLU_041217_21_1_1"/>
<dbReference type="InParanoid" id="Q9QYM5"/>
<dbReference type="OMA" id="NQLARCK"/>
<dbReference type="OrthoDB" id="8830751at2759"/>
<dbReference type="PhylomeDB" id="Q9QYM5"/>
<dbReference type="TreeFam" id="TF330887"/>
<dbReference type="Reactome" id="R-MMU-9696270">
    <property type="pathway name" value="RND2 GTPase cycle"/>
</dbReference>
<dbReference type="BioGRID-ORCS" id="11858">
    <property type="hits" value="4 hits in 79 CRISPR screens"/>
</dbReference>
<dbReference type="ChiTaRS" id="Rnd2">
    <property type="organism name" value="mouse"/>
</dbReference>
<dbReference type="PRO" id="PR:Q9QYM5"/>
<dbReference type="Proteomes" id="UP000000589">
    <property type="component" value="Chromosome 11"/>
</dbReference>
<dbReference type="RNAct" id="Q9QYM5">
    <property type="molecule type" value="protein"/>
</dbReference>
<dbReference type="Bgee" id="ENSMUSG00000001313">
    <property type="expression patterns" value="Expressed in ganglionic eminence and 89 other cell types or tissues"/>
</dbReference>
<dbReference type="ExpressionAtlas" id="Q9QYM5">
    <property type="expression patterns" value="baseline and differential"/>
</dbReference>
<dbReference type="GO" id="GO:0002080">
    <property type="term" value="C:acrosomal membrane"/>
    <property type="evidence" value="ECO:0007669"/>
    <property type="project" value="UniProtKB-SubCell"/>
</dbReference>
<dbReference type="GO" id="GO:0005525">
    <property type="term" value="F:GTP binding"/>
    <property type="evidence" value="ECO:0007669"/>
    <property type="project" value="UniProtKB-KW"/>
</dbReference>
<dbReference type="GO" id="GO:0003924">
    <property type="term" value="F:GTPase activity"/>
    <property type="evidence" value="ECO:0007669"/>
    <property type="project" value="InterPro"/>
</dbReference>
<dbReference type="GO" id="GO:0048668">
    <property type="term" value="P:collateral sprouting"/>
    <property type="evidence" value="ECO:0000315"/>
    <property type="project" value="MGI"/>
</dbReference>
<dbReference type="GO" id="GO:0048672">
    <property type="term" value="P:positive regulation of collateral sprouting"/>
    <property type="evidence" value="ECO:0000315"/>
    <property type="project" value="MGI"/>
</dbReference>
<dbReference type="GO" id="GO:0007264">
    <property type="term" value="P:small GTPase-mediated signal transduction"/>
    <property type="evidence" value="ECO:0007669"/>
    <property type="project" value="InterPro"/>
</dbReference>
<dbReference type="CDD" id="cd04173">
    <property type="entry name" value="Rnd2_Rho7"/>
    <property type="match status" value="1"/>
</dbReference>
<dbReference type="FunFam" id="3.40.50.300:FF:000407">
    <property type="entry name" value="Rho-related GTP-binding protein RhoE"/>
    <property type="match status" value="1"/>
</dbReference>
<dbReference type="Gene3D" id="3.40.50.300">
    <property type="entry name" value="P-loop containing nucleotide triphosphate hydrolases"/>
    <property type="match status" value="1"/>
</dbReference>
<dbReference type="InterPro" id="IPR027417">
    <property type="entry name" value="P-loop_NTPase"/>
</dbReference>
<dbReference type="InterPro" id="IPR041842">
    <property type="entry name" value="RhoN"/>
</dbReference>
<dbReference type="InterPro" id="IPR005225">
    <property type="entry name" value="Small_GTP-bd"/>
</dbReference>
<dbReference type="InterPro" id="IPR001806">
    <property type="entry name" value="Small_GTPase"/>
</dbReference>
<dbReference type="InterPro" id="IPR003578">
    <property type="entry name" value="Small_GTPase_Rho"/>
</dbReference>
<dbReference type="NCBIfam" id="TIGR00231">
    <property type="entry name" value="small_GTP"/>
    <property type="match status" value="1"/>
</dbReference>
<dbReference type="PANTHER" id="PTHR24072">
    <property type="entry name" value="RHO FAMILY GTPASE"/>
    <property type="match status" value="1"/>
</dbReference>
<dbReference type="Pfam" id="PF00071">
    <property type="entry name" value="Ras"/>
    <property type="match status" value="1"/>
</dbReference>
<dbReference type="PRINTS" id="PR00449">
    <property type="entry name" value="RASTRNSFRMNG"/>
</dbReference>
<dbReference type="SMART" id="SM00175">
    <property type="entry name" value="RAB"/>
    <property type="match status" value="1"/>
</dbReference>
<dbReference type="SMART" id="SM00173">
    <property type="entry name" value="RAS"/>
    <property type="match status" value="1"/>
</dbReference>
<dbReference type="SMART" id="SM00174">
    <property type="entry name" value="RHO"/>
    <property type="match status" value="1"/>
</dbReference>
<dbReference type="SUPFAM" id="SSF52540">
    <property type="entry name" value="P-loop containing nucleoside triphosphate hydrolases"/>
    <property type="match status" value="1"/>
</dbReference>
<dbReference type="PROSITE" id="PS51420">
    <property type="entry name" value="RHO"/>
    <property type="match status" value="1"/>
</dbReference>